<feature type="chain" id="PRO_1000192134" description="UDP-N-acetylglucosamine--N-acetylmuramyl-(pentapeptide) pyrophosphoryl-undecaprenol N-acetylglucosamine transferase">
    <location>
        <begin position="1"/>
        <end position="363"/>
    </location>
</feature>
<feature type="binding site" evidence="1">
    <location>
        <begin position="10"/>
        <end position="12"/>
    </location>
    <ligand>
        <name>UDP-N-acetyl-alpha-D-glucosamine</name>
        <dbReference type="ChEBI" id="CHEBI:57705"/>
    </ligand>
</feature>
<feature type="binding site" evidence="1">
    <location>
        <position position="124"/>
    </location>
    <ligand>
        <name>UDP-N-acetyl-alpha-D-glucosamine</name>
        <dbReference type="ChEBI" id="CHEBI:57705"/>
    </ligand>
</feature>
<feature type="binding site" evidence="1">
    <location>
        <position position="195"/>
    </location>
    <ligand>
        <name>UDP-N-acetyl-alpha-D-glucosamine</name>
        <dbReference type="ChEBI" id="CHEBI:57705"/>
    </ligand>
</feature>
<feature type="binding site" evidence="1">
    <location>
        <position position="250"/>
    </location>
    <ligand>
        <name>UDP-N-acetyl-alpha-D-glucosamine</name>
        <dbReference type="ChEBI" id="CHEBI:57705"/>
    </ligand>
</feature>
<feature type="binding site" evidence="1">
    <location>
        <position position="295"/>
    </location>
    <ligand>
        <name>UDP-N-acetyl-alpha-D-glucosamine</name>
        <dbReference type="ChEBI" id="CHEBI:57705"/>
    </ligand>
</feature>
<organism>
    <name type="scientific">Listeria monocytogenes serotype 4a (strain HCC23)</name>
    <dbReference type="NCBI Taxonomy" id="552536"/>
    <lineage>
        <taxon>Bacteria</taxon>
        <taxon>Bacillati</taxon>
        <taxon>Bacillota</taxon>
        <taxon>Bacilli</taxon>
        <taxon>Bacillales</taxon>
        <taxon>Listeriaceae</taxon>
        <taxon>Listeria</taxon>
    </lineage>
</organism>
<accession>B8DBP8</accession>
<dbReference type="EC" id="2.4.1.227" evidence="1"/>
<dbReference type="EMBL" id="CP001175">
    <property type="protein sequence ID" value="ACK38884.1"/>
    <property type="molecule type" value="Genomic_DNA"/>
</dbReference>
<dbReference type="RefSeq" id="WP_012581001.1">
    <property type="nucleotide sequence ID" value="NC_011660.1"/>
</dbReference>
<dbReference type="SMR" id="B8DBP8"/>
<dbReference type="CAZy" id="GT28">
    <property type="family name" value="Glycosyltransferase Family 28"/>
</dbReference>
<dbReference type="KEGG" id="lmh:LMHCC_0527"/>
<dbReference type="HOGENOM" id="CLU_037404_0_1_9"/>
<dbReference type="UniPathway" id="UPA00219"/>
<dbReference type="GO" id="GO:0005886">
    <property type="term" value="C:plasma membrane"/>
    <property type="evidence" value="ECO:0007669"/>
    <property type="project" value="UniProtKB-SubCell"/>
</dbReference>
<dbReference type="GO" id="GO:0051991">
    <property type="term" value="F:UDP-N-acetyl-D-glucosamine:N-acetylmuramoyl-L-alanyl-D-glutamyl-meso-2,6-diaminopimelyl-D-alanyl-D-alanine-diphosphoundecaprenol 4-beta-N-acetylglucosaminlytransferase activity"/>
    <property type="evidence" value="ECO:0007669"/>
    <property type="project" value="RHEA"/>
</dbReference>
<dbReference type="GO" id="GO:0050511">
    <property type="term" value="F:undecaprenyldiphospho-muramoylpentapeptide beta-N-acetylglucosaminyltransferase activity"/>
    <property type="evidence" value="ECO:0007669"/>
    <property type="project" value="UniProtKB-UniRule"/>
</dbReference>
<dbReference type="GO" id="GO:0005975">
    <property type="term" value="P:carbohydrate metabolic process"/>
    <property type="evidence" value="ECO:0007669"/>
    <property type="project" value="InterPro"/>
</dbReference>
<dbReference type="GO" id="GO:0051301">
    <property type="term" value="P:cell division"/>
    <property type="evidence" value="ECO:0007669"/>
    <property type="project" value="UniProtKB-KW"/>
</dbReference>
<dbReference type="GO" id="GO:0071555">
    <property type="term" value="P:cell wall organization"/>
    <property type="evidence" value="ECO:0007669"/>
    <property type="project" value="UniProtKB-KW"/>
</dbReference>
<dbReference type="GO" id="GO:0030259">
    <property type="term" value="P:lipid glycosylation"/>
    <property type="evidence" value="ECO:0007669"/>
    <property type="project" value="UniProtKB-UniRule"/>
</dbReference>
<dbReference type="GO" id="GO:0009252">
    <property type="term" value="P:peptidoglycan biosynthetic process"/>
    <property type="evidence" value="ECO:0007669"/>
    <property type="project" value="UniProtKB-UniRule"/>
</dbReference>
<dbReference type="GO" id="GO:0008360">
    <property type="term" value="P:regulation of cell shape"/>
    <property type="evidence" value="ECO:0007669"/>
    <property type="project" value="UniProtKB-KW"/>
</dbReference>
<dbReference type="CDD" id="cd03785">
    <property type="entry name" value="GT28_MurG"/>
    <property type="match status" value="1"/>
</dbReference>
<dbReference type="Gene3D" id="3.40.50.2000">
    <property type="entry name" value="Glycogen Phosphorylase B"/>
    <property type="match status" value="2"/>
</dbReference>
<dbReference type="HAMAP" id="MF_00033">
    <property type="entry name" value="MurG"/>
    <property type="match status" value="1"/>
</dbReference>
<dbReference type="InterPro" id="IPR006009">
    <property type="entry name" value="GlcNAc_MurG"/>
</dbReference>
<dbReference type="InterPro" id="IPR007235">
    <property type="entry name" value="Glyco_trans_28_C"/>
</dbReference>
<dbReference type="InterPro" id="IPR004276">
    <property type="entry name" value="GlycoTrans_28_N"/>
</dbReference>
<dbReference type="NCBIfam" id="TIGR01133">
    <property type="entry name" value="murG"/>
    <property type="match status" value="1"/>
</dbReference>
<dbReference type="PANTHER" id="PTHR21015:SF22">
    <property type="entry name" value="GLYCOSYLTRANSFERASE"/>
    <property type="match status" value="1"/>
</dbReference>
<dbReference type="PANTHER" id="PTHR21015">
    <property type="entry name" value="UDP-N-ACETYLGLUCOSAMINE--N-ACETYLMURAMYL-(PENTAPEPTIDE) PYROPHOSPHORYL-UNDECAPRENOL N-ACETYLGLUCOSAMINE TRANSFERASE 1"/>
    <property type="match status" value="1"/>
</dbReference>
<dbReference type="Pfam" id="PF04101">
    <property type="entry name" value="Glyco_tran_28_C"/>
    <property type="match status" value="1"/>
</dbReference>
<dbReference type="Pfam" id="PF03033">
    <property type="entry name" value="Glyco_transf_28"/>
    <property type="match status" value="1"/>
</dbReference>
<dbReference type="SUPFAM" id="SSF53756">
    <property type="entry name" value="UDP-Glycosyltransferase/glycogen phosphorylase"/>
    <property type="match status" value="1"/>
</dbReference>
<proteinExistence type="inferred from homology"/>
<gene>
    <name evidence="1" type="primary">murG</name>
    <name type="ordered locus">LMHCC_0527</name>
</gene>
<sequence length="363" mass="39089">MKVAISGGGTGGHVYPALALIRELKKVHPEAEFLYIGTEKGLEAGIVKREGIPFEAIEITGFKRSLSLENIKTVMRFLSGAKKSKQILRDFKPDVVIGTGGYVCGPVVYAAAKLKIPTLIHEQNSVAGLTNKFLSRYTDKVAICFEEVSDSFASEKIVFTGNPRASEVVGVDSEGALEAYGLVSGKPTVLVFGGSRGARGVNEAVEAILPEWNNRDFQLLYVTGDVHYEKIKDSLAELNLGYHISVQPFIYDMPKILNAVTLVVSRAGATTLAELTALGVPSILIPSPYVTANHQENNARALEKNNAAIVITEAELKNTNLMATVDSILNDETKLNGMKLSAKQMGRPDAAAKLVEAVLSIMK</sequence>
<reference key="1">
    <citation type="journal article" date="2011" name="J. Bacteriol.">
        <title>Genome sequence of lineage III Listeria monocytogenes strain HCC23.</title>
        <authorList>
            <person name="Steele C.L."/>
            <person name="Donaldson J.R."/>
            <person name="Paul D."/>
            <person name="Banes M.M."/>
            <person name="Arick T."/>
            <person name="Bridges S.M."/>
            <person name="Lawrence M.L."/>
        </authorList>
    </citation>
    <scope>NUCLEOTIDE SEQUENCE [LARGE SCALE GENOMIC DNA]</scope>
    <source>
        <strain>HCC23</strain>
    </source>
</reference>
<protein>
    <recommendedName>
        <fullName evidence="1">UDP-N-acetylglucosamine--N-acetylmuramyl-(pentapeptide) pyrophosphoryl-undecaprenol N-acetylglucosamine transferase</fullName>
        <ecNumber evidence="1">2.4.1.227</ecNumber>
    </recommendedName>
    <alternativeName>
        <fullName evidence="1">Undecaprenyl-PP-MurNAc-pentapeptide-UDPGlcNAc GlcNAc transferase</fullName>
    </alternativeName>
</protein>
<comment type="function">
    <text evidence="1">Cell wall formation. Catalyzes the transfer of a GlcNAc subunit on undecaprenyl-pyrophosphoryl-MurNAc-pentapeptide (lipid intermediate I) to form undecaprenyl-pyrophosphoryl-MurNAc-(pentapeptide)GlcNAc (lipid intermediate II).</text>
</comment>
<comment type="catalytic activity">
    <reaction evidence="1">
        <text>di-trans,octa-cis-undecaprenyl diphospho-N-acetyl-alpha-D-muramoyl-L-alanyl-D-glutamyl-meso-2,6-diaminopimeloyl-D-alanyl-D-alanine + UDP-N-acetyl-alpha-D-glucosamine = di-trans,octa-cis-undecaprenyl diphospho-[N-acetyl-alpha-D-glucosaminyl-(1-&gt;4)]-N-acetyl-alpha-D-muramoyl-L-alanyl-D-glutamyl-meso-2,6-diaminopimeloyl-D-alanyl-D-alanine + UDP + H(+)</text>
        <dbReference type="Rhea" id="RHEA:31227"/>
        <dbReference type="ChEBI" id="CHEBI:15378"/>
        <dbReference type="ChEBI" id="CHEBI:57705"/>
        <dbReference type="ChEBI" id="CHEBI:58223"/>
        <dbReference type="ChEBI" id="CHEBI:61387"/>
        <dbReference type="ChEBI" id="CHEBI:61388"/>
        <dbReference type="EC" id="2.4.1.227"/>
    </reaction>
</comment>
<comment type="pathway">
    <text evidence="1">Cell wall biogenesis; peptidoglycan biosynthesis.</text>
</comment>
<comment type="subcellular location">
    <subcellularLocation>
        <location evidence="1">Cell membrane</location>
        <topology evidence="1">Peripheral membrane protein</topology>
        <orientation evidence="1">Cytoplasmic side</orientation>
    </subcellularLocation>
</comment>
<comment type="similarity">
    <text evidence="1">Belongs to the glycosyltransferase 28 family. MurG subfamily.</text>
</comment>
<keyword id="KW-0131">Cell cycle</keyword>
<keyword id="KW-0132">Cell division</keyword>
<keyword id="KW-1003">Cell membrane</keyword>
<keyword id="KW-0133">Cell shape</keyword>
<keyword id="KW-0961">Cell wall biogenesis/degradation</keyword>
<keyword id="KW-0328">Glycosyltransferase</keyword>
<keyword id="KW-0472">Membrane</keyword>
<keyword id="KW-0573">Peptidoglycan synthesis</keyword>
<keyword id="KW-0808">Transferase</keyword>
<evidence type="ECO:0000255" key="1">
    <source>
        <dbReference type="HAMAP-Rule" id="MF_00033"/>
    </source>
</evidence>
<name>MURG_LISMH</name>